<protein>
    <recommendedName>
        <fullName evidence="1">Large ribosomal subunit protein bL34</fullName>
    </recommendedName>
    <alternativeName>
        <fullName evidence="3">50S ribosomal protein L34</fullName>
    </alternativeName>
</protein>
<organism>
    <name type="scientific">Streptococcus pyogenes serotype M12 (strain MGAS2096)</name>
    <dbReference type="NCBI Taxonomy" id="370553"/>
    <lineage>
        <taxon>Bacteria</taxon>
        <taxon>Bacillati</taxon>
        <taxon>Bacillota</taxon>
        <taxon>Bacilli</taxon>
        <taxon>Lactobacillales</taxon>
        <taxon>Streptococcaceae</taxon>
        <taxon>Streptococcus</taxon>
    </lineage>
</organism>
<accession>Q1JDM8</accession>
<reference key="1">
    <citation type="journal article" date="2006" name="Proc. Natl. Acad. Sci. U.S.A.">
        <title>Molecular genetic anatomy of inter- and intraserotype variation in the human bacterial pathogen group A Streptococcus.</title>
        <authorList>
            <person name="Beres S.B."/>
            <person name="Richter E.W."/>
            <person name="Nagiec M.J."/>
            <person name="Sumby P."/>
            <person name="Porcella S.F."/>
            <person name="DeLeo F.R."/>
            <person name="Musser J.M."/>
        </authorList>
    </citation>
    <scope>NUCLEOTIDE SEQUENCE [LARGE SCALE GENOMIC DNA]</scope>
    <source>
        <strain>MGAS2096</strain>
    </source>
</reference>
<evidence type="ECO:0000255" key="1">
    <source>
        <dbReference type="HAMAP-Rule" id="MF_00391"/>
    </source>
</evidence>
<evidence type="ECO:0000256" key="2">
    <source>
        <dbReference type="SAM" id="MobiDB-lite"/>
    </source>
</evidence>
<evidence type="ECO:0000305" key="3"/>
<dbReference type="EMBL" id="CP000261">
    <property type="protein sequence ID" value="ABF35280.1"/>
    <property type="molecule type" value="Genomic_DNA"/>
</dbReference>
<dbReference type="SMR" id="Q1JDM8"/>
<dbReference type="KEGG" id="spj:MGAS2096_Spy0228"/>
<dbReference type="HOGENOM" id="CLU_129938_2_0_9"/>
<dbReference type="GO" id="GO:1990904">
    <property type="term" value="C:ribonucleoprotein complex"/>
    <property type="evidence" value="ECO:0007669"/>
    <property type="project" value="UniProtKB-KW"/>
</dbReference>
<dbReference type="GO" id="GO:0005840">
    <property type="term" value="C:ribosome"/>
    <property type="evidence" value="ECO:0007669"/>
    <property type="project" value="UniProtKB-KW"/>
</dbReference>
<dbReference type="GO" id="GO:0003735">
    <property type="term" value="F:structural constituent of ribosome"/>
    <property type="evidence" value="ECO:0007669"/>
    <property type="project" value="InterPro"/>
</dbReference>
<dbReference type="GO" id="GO:0006412">
    <property type="term" value="P:translation"/>
    <property type="evidence" value="ECO:0007669"/>
    <property type="project" value="UniProtKB-UniRule"/>
</dbReference>
<dbReference type="FunFam" id="1.10.287.3980:FF:000001">
    <property type="entry name" value="Mitochondrial ribosomal protein L34"/>
    <property type="match status" value="1"/>
</dbReference>
<dbReference type="Gene3D" id="1.10.287.3980">
    <property type="match status" value="1"/>
</dbReference>
<dbReference type="HAMAP" id="MF_00391">
    <property type="entry name" value="Ribosomal_bL34"/>
    <property type="match status" value="1"/>
</dbReference>
<dbReference type="InterPro" id="IPR000271">
    <property type="entry name" value="Ribosomal_bL34"/>
</dbReference>
<dbReference type="InterPro" id="IPR020939">
    <property type="entry name" value="Ribosomal_bL34_CS"/>
</dbReference>
<dbReference type="NCBIfam" id="TIGR01030">
    <property type="entry name" value="rpmH_bact"/>
    <property type="match status" value="1"/>
</dbReference>
<dbReference type="PANTHER" id="PTHR14503:SF4">
    <property type="entry name" value="LARGE RIBOSOMAL SUBUNIT PROTEIN BL34M"/>
    <property type="match status" value="1"/>
</dbReference>
<dbReference type="PANTHER" id="PTHR14503">
    <property type="entry name" value="MITOCHONDRIAL RIBOSOMAL PROTEIN 34 FAMILY MEMBER"/>
    <property type="match status" value="1"/>
</dbReference>
<dbReference type="Pfam" id="PF00468">
    <property type="entry name" value="Ribosomal_L34"/>
    <property type="match status" value="1"/>
</dbReference>
<dbReference type="PROSITE" id="PS00784">
    <property type="entry name" value="RIBOSOMAL_L34"/>
    <property type="match status" value="1"/>
</dbReference>
<keyword id="KW-0687">Ribonucleoprotein</keyword>
<keyword id="KW-0689">Ribosomal protein</keyword>
<comment type="similarity">
    <text evidence="1">Belongs to the bacterial ribosomal protein bL34 family.</text>
</comment>
<feature type="chain" id="PRO_1000013463" description="Large ribosomal subunit protein bL34">
    <location>
        <begin position="1"/>
        <end position="44"/>
    </location>
</feature>
<feature type="region of interest" description="Disordered" evidence="2">
    <location>
        <begin position="1"/>
        <end position="44"/>
    </location>
</feature>
<name>RL34_STRPB</name>
<proteinExistence type="inferred from homology"/>
<gene>
    <name evidence="1" type="primary">rpmH</name>
    <name type="ordered locus">MGAS2096_Spy0228</name>
</gene>
<sequence length="44" mass="5361">MKRTYQPSKIRRQRKHGFRHRMSTKNGRRVLAARRRKGRKVLSA</sequence>